<feature type="chain" id="PRO_0000223276" description="Unique short US2 glycoprotein">
    <location>
        <begin position="1"/>
        <end position="199"/>
    </location>
</feature>
<feature type="signal peptide" description="Not cleaved" evidence="1">
    <location>
        <begin position="1"/>
        <end status="unknown"/>
    </location>
</feature>
<feature type="topological domain" description="Lumenal" evidence="3">
    <location>
        <begin position="1"/>
        <end position="161"/>
    </location>
</feature>
<feature type="transmembrane region" description="Helical" evidence="3">
    <location>
        <begin position="162"/>
        <end position="182"/>
    </location>
</feature>
<feature type="topological domain" description="Cytoplasmic" evidence="3">
    <location>
        <begin position="183"/>
        <end position="199"/>
    </location>
</feature>
<feature type="domain" description="Ig-like H-type">
    <location>
        <begin position="43"/>
        <end position="137"/>
    </location>
</feature>
<feature type="glycosylation site" description="N-linked (GlcNAc...) asparagine; by host" evidence="2">
    <location>
        <position position="68"/>
    </location>
</feature>
<feature type="disulfide bond" evidence="2">
    <location>
        <begin position="52"/>
        <end position="133"/>
    </location>
</feature>
<organism>
    <name type="scientific">Human cytomegalovirus (strain Towne)</name>
    <name type="common">HHV-5</name>
    <name type="synonym">Human herpesvirus 5</name>
    <dbReference type="NCBI Taxonomy" id="10363"/>
    <lineage>
        <taxon>Viruses</taxon>
        <taxon>Duplodnaviria</taxon>
        <taxon>Heunggongvirae</taxon>
        <taxon>Peploviricota</taxon>
        <taxon>Herviviricetes</taxon>
        <taxon>Herpesvirales</taxon>
        <taxon>Orthoherpesviridae</taxon>
        <taxon>Betaherpesvirinae</taxon>
        <taxon>Cytomegalovirus</taxon>
        <taxon>Cytomegalovirus humanbeta5</taxon>
        <taxon>Human cytomegalovirus</taxon>
    </lineage>
</organism>
<protein>
    <recommendedName>
        <fullName>Unique short US2 glycoprotein</fullName>
    </recommendedName>
    <alternativeName>
        <fullName>HQLF2</fullName>
    </alternativeName>
    <alternativeName>
        <fullName>gpUS2</fullName>
    </alternativeName>
</protein>
<keyword id="KW-1015">Disulfide bond</keyword>
<keyword id="KW-0244">Early protein</keyword>
<keyword id="KW-0325">Glycoprotein</keyword>
<keyword id="KW-1038">Host endoplasmic reticulum</keyword>
<keyword id="KW-1043">Host membrane</keyword>
<keyword id="KW-0945">Host-virus interaction</keyword>
<keyword id="KW-0393">Immunoglobulin domain</keyword>
<keyword id="KW-0472">Membrane</keyword>
<keyword id="KW-0732">Signal</keyword>
<keyword id="KW-0812">Transmembrane</keyword>
<keyword id="KW-1133">Transmembrane helix</keyword>
<keyword id="KW-0899">Viral immunoevasion</keyword>
<organismHost>
    <name type="scientific">Homo sapiens</name>
    <name type="common">Human</name>
    <dbReference type="NCBI Taxonomy" id="9606"/>
</organismHost>
<evidence type="ECO:0000250" key="1"/>
<evidence type="ECO:0000250" key="2">
    <source>
        <dbReference type="UniProtKB" id="P09713"/>
    </source>
</evidence>
<evidence type="ECO:0000255" key="3"/>
<evidence type="ECO:0000305" key="4"/>
<reference key="1">
    <citation type="journal article" date="2003" name="Xenotransplantation">
        <title>Exploiting virus stealth technology for xenotransplantation: reduced human T cell responses to porcine cells expressing herpes simplex virus ICP47.</title>
        <authorList>
            <person name="Crew M.D."/>
            <person name="Phanavanh B."/>
        </authorList>
    </citation>
    <scope>NUCLEOTIDE SEQUENCE [GENOMIC DNA]</scope>
</reference>
<gene>
    <name type="primary">US2</name>
</gene>
<proteinExistence type="inferred from homology"/>
<accession>P60503</accession>
<comment type="function">
    <text evidence="2">Participates in the inhibition of the host immune response. Early protein that redirects newly synthesized major histocompatibility complex (MHC) class I heavy chains via the SEC61 translocon to the cytosol where they undergo proteasome-dependent destruction. In consequence, infected cells are masked for immune recognition by cytotoxic T lymphocytes. Seems so far to be specific for HLA-A, HLA-B, and HFE loci products. Does not interact with HLA-DR or HLA-DM.</text>
</comment>
<comment type="subunit">
    <text evidence="2">Monomer. Interacts with host TRAM1.</text>
</comment>
<comment type="subcellular location">
    <subcellularLocation>
        <location evidence="1">Host endoplasmic reticulum membrane</location>
        <topology evidence="1">Single-pass type I membrane protein</topology>
    </subcellularLocation>
</comment>
<comment type="domain">
    <text evidence="1">The lumenal domain allows tight interaction with class I molecules encoded by the HLA-A locus.</text>
</comment>
<comment type="PTM">
    <text evidence="1">The signal sequence is not cleaved.</text>
</comment>
<comment type="similarity">
    <text evidence="4">Belongs to the cytomegalovirus US2 family.</text>
</comment>
<name>US02_HCMVT</name>
<sequence>MNNLWKAWVGLWTSMGPLIRLPDGITKAGEDALRPWKSTAKHPWFQIEDNRCYIDNGKLFARGSIVGNMSRFVFDPKADYGGVGENLYVHADDVEFVPGESLKWNVRNLDVMPIFETLALRLVLQGDVIWLRCVPELRVDYTSSAYMWNMQYGMVRKSYTHVAWTIVFYSINITLLVLFIVYVTVDCNLSMMWMRFFVC</sequence>
<dbReference type="EMBL" id="AY072773">
    <property type="protein sequence ID" value="AAL67141.1"/>
    <property type="molecule type" value="Genomic_DNA"/>
</dbReference>
<dbReference type="SMR" id="P60503"/>
<dbReference type="GlyCosmos" id="P60503">
    <property type="glycosylation" value="1 site, No reported glycans"/>
</dbReference>
<dbReference type="GO" id="GO:0044167">
    <property type="term" value="C:host cell endoplasmic reticulum membrane"/>
    <property type="evidence" value="ECO:0007669"/>
    <property type="project" value="UniProtKB-SubCell"/>
</dbReference>
<dbReference type="GO" id="GO:0016020">
    <property type="term" value="C:membrane"/>
    <property type="evidence" value="ECO:0007669"/>
    <property type="project" value="UniProtKB-KW"/>
</dbReference>
<dbReference type="Gene3D" id="2.60.40.1200">
    <property type="match status" value="1"/>
</dbReference>
<dbReference type="InterPro" id="IPR009237">
    <property type="entry name" value="Herpes_US2/US3"/>
</dbReference>
<dbReference type="InterPro" id="IPR014756">
    <property type="entry name" value="Ig_E-set"/>
</dbReference>
<dbReference type="Pfam" id="PF05963">
    <property type="entry name" value="Cytomega_US3"/>
    <property type="match status" value="1"/>
</dbReference>
<dbReference type="SUPFAM" id="SSF81296">
    <property type="entry name" value="E set domains"/>
    <property type="match status" value="1"/>
</dbReference>